<dbReference type="EC" id="2.7.8.26" evidence="1"/>
<dbReference type="EMBL" id="BA000036">
    <property type="protein sequence ID" value="BAB99594.1"/>
    <property type="molecule type" value="Genomic_DNA"/>
</dbReference>
<dbReference type="EMBL" id="BX927154">
    <property type="protein sequence ID" value="CAF20542.1"/>
    <property type="molecule type" value="Genomic_DNA"/>
</dbReference>
<dbReference type="RefSeq" id="NP_601405.1">
    <property type="nucleotide sequence ID" value="NC_003450.3"/>
</dbReference>
<dbReference type="RefSeq" id="WP_011014955.1">
    <property type="nucleotide sequence ID" value="NC_006958.1"/>
</dbReference>
<dbReference type="STRING" id="196627.cg2415"/>
<dbReference type="KEGG" id="cgb:cg2415"/>
<dbReference type="KEGG" id="cgl:Cgl2201"/>
<dbReference type="PATRIC" id="fig|196627.13.peg.2137"/>
<dbReference type="eggNOG" id="COG0368">
    <property type="taxonomic scope" value="Bacteria"/>
</dbReference>
<dbReference type="HOGENOM" id="CLU_057426_0_0_11"/>
<dbReference type="OrthoDB" id="9794223at2"/>
<dbReference type="BioCyc" id="CORYNE:G18NG-11793-MONOMER"/>
<dbReference type="UniPathway" id="UPA00148">
    <property type="reaction ID" value="UER00238"/>
</dbReference>
<dbReference type="Proteomes" id="UP000000582">
    <property type="component" value="Chromosome"/>
</dbReference>
<dbReference type="Proteomes" id="UP000001009">
    <property type="component" value="Chromosome"/>
</dbReference>
<dbReference type="GO" id="GO:0005886">
    <property type="term" value="C:plasma membrane"/>
    <property type="evidence" value="ECO:0007669"/>
    <property type="project" value="UniProtKB-SubCell"/>
</dbReference>
<dbReference type="GO" id="GO:0051073">
    <property type="term" value="F:adenosylcobinamide-GDP ribazoletransferase activity"/>
    <property type="evidence" value="ECO:0007669"/>
    <property type="project" value="UniProtKB-UniRule"/>
</dbReference>
<dbReference type="GO" id="GO:0008818">
    <property type="term" value="F:cobalamin 5'-phosphate synthase activity"/>
    <property type="evidence" value="ECO:0007669"/>
    <property type="project" value="UniProtKB-UniRule"/>
</dbReference>
<dbReference type="GO" id="GO:0009236">
    <property type="term" value="P:cobalamin biosynthetic process"/>
    <property type="evidence" value="ECO:0007669"/>
    <property type="project" value="UniProtKB-UniRule"/>
</dbReference>
<dbReference type="HAMAP" id="MF_00719">
    <property type="entry name" value="CobS"/>
    <property type="match status" value="1"/>
</dbReference>
<dbReference type="InterPro" id="IPR003805">
    <property type="entry name" value="CobS"/>
</dbReference>
<dbReference type="NCBIfam" id="NF001282">
    <property type="entry name" value="PRK00235.2-4"/>
    <property type="match status" value="1"/>
</dbReference>
<dbReference type="PANTHER" id="PTHR34148">
    <property type="entry name" value="ADENOSYLCOBINAMIDE-GDP RIBAZOLETRANSFERASE"/>
    <property type="match status" value="1"/>
</dbReference>
<dbReference type="PANTHER" id="PTHR34148:SF1">
    <property type="entry name" value="ADENOSYLCOBINAMIDE-GDP RIBAZOLETRANSFERASE"/>
    <property type="match status" value="1"/>
</dbReference>
<dbReference type="Pfam" id="PF02654">
    <property type="entry name" value="CobS"/>
    <property type="match status" value="1"/>
</dbReference>
<comment type="function">
    <text evidence="1">Joins adenosylcobinamide-GDP and alpha-ribazole to generate adenosylcobalamin (Ado-cobalamin). Also synthesizes adenosylcobalamin 5'-phosphate from adenosylcobinamide-GDP and alpha-ribazole 5'-phosphate.</text>
</comment>
<comment type="catalytic activity">
    <reaction evidence="1">
        <text>alpha-ribazole + adenosylcob(III)inamide-GDP = adenosylcob(III)alamin + GMP + H(+)</text>
        <dbReference type="Rhea" id="RHEA:16049"/>
        <dbReference type="ChEBI" id="CHEBI:10329"/>
        <dbReference type="ChEBI" id="CHEBI:15378"/>
        <dbReference type="ChEBI" id="CHEBI:18408"/>
        <dbReference type="ChEBI" id="CHEBI:58115"/>
        <dbReference type="ChEBI" id="CHEBI:60487"/>
        <dbReference type="EC" id="2.7.8.26"/>
    </reaction>
</comment>
<comment type="catalytic activity">
    <reaction evidence="1">
        <text>alpha-ribazole 5'-phosphate + adenosylcob(III)inamide-GDP = adenosylcob(III)alamin 5'-phosphate + GMP + H(+)</text>
        <dbReference type="Rhea" id="RHEA:23560"/>
        <dbReference type="ChEBI" id="CHEBI:15378"/>
        <dbReference type="ChEBI" id="CHEBI:57918"/>
        <dbReference type="ChEBI" id="CHEBI:58115"/>
        <dbReference type="ChEBI" id="CHEBI:60487"/>
        <dbReference type="ChEBI" id="CHEBI:60493"/>
        <dbReference type="EC" id="2.7.8.26"/>
    </reaction>
</comment>
<comment type="cofactor">
    <cofactor evidence="1">
        <name>Mg(2+)</name>
        <dbReference type="ChEBI" id="CHEBI:18420"/>
    </cofactor>
</comment>
<comment type="pathway">
    <text evidence="1">Cofactor biosynthesis; adenosylcobalamin biosynthesis; adenosylcobalamin from cob(II)yrinate a,c-diamide: step 7/7.</text>
</comment>
<comment type="subcellular location">
    <subcellularLocation>
        <location evidence="1">Cell membrane</location>
        <topology evidence="1">Multi-pass membrane protein</topology>
    </subcellularLocation>
</comment>
<comment type="similarity">
    <text evidence="1">Belongs to the CobS family.</text>
</comment>
<gene>
    <name evidence="1" type="primary">cobS</name>
    <name type="ordered locus">Cgl2201</name>
    <name type="ordered locus">cg2415</name>
</gene>
<feature type="chain" id="PRO_0000146874" description="Adenosylcobinamide-GDP ribazoletransferase">
    <location>
        <begin position="1"/>
        <end position="307"/>
    </location>
</feature>
<feature type="transmembrane region" description="Helical" evidence="1">
    <location>
        <begin position="22"/>
        <end position="42"/>
    </location>
</feature>
<feature type="transmembrane region" description="Helical" evidence="1">
    <location>
        <begin position="58"/>
        <end position="78"/>
    </location>
</feature>
<feature type="transmembrane region" description="Helical" evidence="1">
    <location>
        <begin position="80"/>
        <end position="100"/>
    </location>
</feature>
<feature type="transmembrane region" description="Helical" evidence="1">
    <location>
        <begin position="137"/>
        <end position="157"/>
    </location>
</feature>
<feature type="transmembrane region" description="Helical" evidence="1">
    <location>
        <begin position="161"/>
        <end position="181"/>
    </location>
</feature>
<feature type="transmembrane region" description="Helical" evidence="1">
    <location>
        <begin position="212"/>
        <end position="232"/>
    </location>
</feature>
<feature type="transmembrane region" description="Helical" evidence="1">
    <location>
        <begin position="248"/>
        <end position="268"/>
    </location>
</feature>
<feature type="transmembrane region" description="Helical" evidence="1">
    <location>
        <begin position="283"/>
        <end position="303"/>
    </location>
</feature>
<evidence type="ECO:0000255" key="1">
    <source>
        <dbReference type="HAMAP-Rule" id="MF_00719"/>
    </source>
</evidence>
<protein>
    <recommendedName>
        <fullName evidence="1">Adenosylcobinamide-GDP ribazoletransferase</fullName>
        <ecNumber evidence="1">2.7.8.26</ecNumber>
    </recommendedName>
    <alternativeName>
        <fullName evidence="1">Cobalamin synthase</fullName>
    </alternativeName>
    <alternativeName>
        <fullName evidence="1">Cobalamin-5'-phosphate synthase</fullName>
    </alternativeName>
</protein>
<reference key="1">
    <citation type="journal article" date="2003" name="Appl. Microbiol. Biotechnol.">
        <title>The Corynebacterium glutamicum genome: features and impacts on biotechnological processes.</title>
        <authorList>
            <person name="Ikeda M."/>
            <person name="Nakagawa S."/>
        </authorList>
    </citation>
    <scope>NUCLEOTIDE SEQUENCE [LARGE SCALE GENOMIC DNA]</scope>
    <source>
        <strain>ATCC 13032 / DSM 20300 / JCM 1318 / BCRC 11384 / CCUG 27702 / LMG 3730 / NBRC 12168 / NCIMB 10025 / NRRL B-2784 / 534</strain>
    </source>
</reference>
<reference key="2">
    <citation type="journal article" date="2003" name="J. Biotechnol.">
        <title>The complete Corynebacterium glutamicum ATCC 13032 genome sequence and its impact on the production of L-aspartate-derived amino acids and vitamins.</title>
        <authorList>
            <person name="Kalinowski J."/>
            <person name="Bathe B."/>
            <person name="Bartels D."/>
            <person name="Bischoff N."/>
            <person name="Bott M."/>
            <person name="Burkovski A."/>
            <person name="Dusch N."/>
            <person name="Eggeling L."/>
            <person name="Eikmanns B.J."/>
            <person name="Gaigalat L."/>
            <person name="Goesmann A."/>
            <person name="Hartmann M."/>
            <person name="Huthmacher K."/>
            <person name="Kraemer R."/>
            <person name="Linke B."/>
            <person name="McHardy A.C."/>
            <person name="Meyer F."/>
            <person name="Moeckel B."/>
            <person name="Pfefferle W."/>
            <person name="Puehler A."/>
            <person name="Rey D.A."/>
            <person name="Rueckert C."/>
            <person name="Rupp O."/>
            <person name="Sahm H."/>
            <person name="Wendisch V.F."/>
            <person name="Wiegraebe I."/>
            <person name="Tauch A."/>
        </authorList>
    </citation>
    <scope>NUCLEOTIDE SEQUENCE [LARGE SCALE GENOMIC DNA]</scope>
    <source>
        <strain>ATCC 13032 / DSM 20300 / JCM 1318 / BCRC 11384 / CCUG 27702 / LMG 3730 / NBRC 12168 / NCIMB 10025 / NRRL B-2784 / 534</strain>
    </source>
</reference>
<keyword id="KW-1003">Cell membrane</keyword>
<keyword id="KW-0169">Cobalamin biosynthesis</keyword>
<keyword id="KW-0460">Magnesium</keyword>
<keyword id="KW-0472">Membrane</keyword>
<keyword id="KW-1185">Reference proteome</keyword>
<keyword id="KW-0808">Transferase</keyword>
<keyword id="KW-0812">Transmembrane</keyword>
<keyword id="KW-1133">Transmembrane helix</keyword>
<organism>
    <name type="scientific">Corynebacterium glutamicum (strain ATCC 13032 / DSM 20300 / JCM 1318 / BCRC 11384 / CCUG 27702 / LMG 3730 / NBRC 12168 / NCIMB 10025 / NRRL B-2784 / 534)</name>
    <dbReference type="NCBI Taxonomy" id="196627"/>
    <lineage>
        <taxon>Bacteria</taxon>
        <taxon>Bacillati</taxon>
        <taxon>Actinomycetota</taxon>
        <taxon>Actinomycetes</taxon>
        <taxon>Mycobacteriales</taxon>
        <taxon>Corynebacteriaceae</taxon>
        <taxon>Corynebacterium</taxon>
    </lineage>
</organism>
<name>COBS_CORGL</name>
<accession>Q8NNJ7</accession>
<sequence>MSGKAGFTPEDPEDSDNRHGNPLFEGIFTALNWMTVLPVPGASVFDRTTGARVMASLPFVGFVFGMFTAIIMWAIGPISGVIHVDGLLVAVLIVAFWELLNRFMHLDGLADVSDALGSYAAPPRAREILADPRTGLFGLATAMLSVLLQVAAVASLVDSTVWWMICFIPVLGRIAGQVTALKNHNAFSPTGFGALVIGTVKFWWIALWLLVTAALAFWCAELISPLSPLTSVNTPFVAGPFPAAINPAWLGGWVAITAVVACVFAALFSRRLSRSFGGLNGDCIGACIHLGASISAVMFAVVANAMV</sequence>
<proteinExistence type="inferred from homology"/>